<name>KATG2_BURCH</name>
<evidence type="ECO:0000255" key="1">
    <source>
        <dbReference type="HAMAP-Rule" id="MF_01961"/>
    </source>
</evidence>
<evidence type="ECO:0000256" key="2">
    <source>
        <dbReference type="SAM" id="MobiDB-lite"/>
    </source>
</evidence>
<gene>
    <name evidence="1" type="primary">katG2</name>
    <name type="ordered locus">Bcen2424_5199</name>
</gene>
<feature type="chain" id="PRO_0000354735" description="Catalase-peroxidase 2">
    <location>
        <begin position="1"/>
        <end position="728"/>
    </location>
</feature>
<feature type="region of interest" description="Disordered" evidence="2">
    <location>
        <begin position="1"/>
        <end position="20"/>
    </location>
</feature>
<feature type="region of interest" description="Disordered" evidence="2">
    <location>
        <begin position="335"/>
        <end position="355"/>
    </location>
</feature>
<feature type="active site" description="Proton acceptor" evidence="1">
    <location>
        <position position="92"/>
    </location>
</feature>
<feature type="binding site" description="axial binding residue" evidence="1">
    <location>
        <position position="255"/>
    </location>
    <ligand>
        <name>heme b</name>
        <dbReference type="ChEBI" id="CHEBI:60344"/>
    </ligand>
    <ligandPart>
        <name>Fe</name>
        <dbReference type="ChEBI" id="CHEBI:18248"/>
    </ligandPart>
</feature>
<feature type="site" description="Transition state stabilizer" evidence="1">
    <location>
        <position position="88"/>
    </location>
</feature>
<feature type="cross-link" description="Tryptophyl-tyrosyl-methioninium (Trp-Tyr) (with M-240)" evidence="1">
    <location>
        <begin position="91"/>
        <end position="214"/>
    </location>
</feature>
<feature type="cross-link" description="Tryptophyl-tyrosyl-methioninium (Tyr-Met) (with W-91)" evidence="1">
    <location>
        <begin position="214"/>
        <end position="240"/>
    </location>
</feature>
<accession>A0B2Q6</accession>
<comment type="function">
    <text evidence="1">Bifunctional enzyme with both catalase and broad-spectrum peroxidase activity.</text>
</comment>
<comment type="catalytic activity">
    <reaction evidence="1">
        <text>H2O2 + AH2 = A + 2 H2O</text>
        <dbReference type="Rhea" id="RHEA:30275"/>
        <dbReference type="ChEBI" id="CHEBI:13193"/>
        <dbReference type="ChEBI" id="CHEBI:15377"/>
        <dbReference type="ChEBI" id="CHEBI:16240"/>
        <dbReference type="ChEBI" id="CHEBI:17499"/>
        <dbReference type="EC" id="1.11.1.21"/>
    </reaction>
</comment>
<comment type="catalytic activity">
    <reaction evidence="1">
        <text>2 H2O2 = O2 + 2 H2O</text>
        <dbReference type="Rhea" id="RHEA:20309"/>
        <dbReference type="ChEBI" id="CHEBI:15377"/>
        <dbReference type="ChEBI" id="CHEBI:15379"/>
        <dbReference type="ChEBI" id="CHEBI:16240"/>
        <dbReference type="EC" id="1.11.1.21"/>
    </reaction>
</comment>
<comment type="cofactor">
    <cofactor evidence="1">
        <name>heme b</name>
        <dbReference type="ChEBI" id="CHEBI:60344"/>
    </cofactor>
    <text evidence="1">Binds 1 heme b (iron(II)-protoporphyrin IX) group per dimer.</text>
</comment>
<comment type="subunit">
    <text evidence="1">Homodimer or homotetramer.</text>
</comment>
<comment type="PTM">
    <text evidence="1">Formation of the three residue Trp-Tyr-Met cross-link is important for the catalase, but not the peroxidase activity of the enzyme.</text>
</comment>
<comment type="similarity">
    <text evidence="1">Belongs to the peroxidase family. Peroxidase/catalase subfamily.</text>
</comment>
<organism>
    <name type="scientific">Burkholderia cenocepacia (strain HI2424)</name>
    <dbReference type="NCBI Taxonomy" id="331272"/>
    <lineage>
        <taxon>Bacteria</taxon>
        <taxon>Pseudomonadati</taxon>
        <taxon>Pseudomonadota</taxon>
        <taxon>Betaproteobacteria</taxon>
        <taxon>Burkholderiales</taxon>
        <taxon>Burkholderiaceae</taxon>
        <taxon>Burkholderia</taxon>
        <taxon>Burkholderia cepacia complex</taxon>
    </lineage>
</organism>
<dbReference type="EC" id="1.11.1.21" evidence="1"/>
<dbReference type="EMBL" id="CP000459">
    <property type="protein sequence ID" value="ABK11932.1"/>
    <property type="molecule type" value="Genomic_DNA"/>
</dbReference>
<dbReference type="SMR" id="A0B2Q6"/>
<dbReference type="PeroxiBase" id="2700">
    <property type="entry name" value="BcenCP02_HI2424"/>
</dbReference>
<dbReference type="KEGG" id="bch:Bcen2424_5199"/>
<dbReference type="HOGENOM" id="CLU_025424_2_0_4"/>
<dbReference type="GO" id="GO:0005829">
    <property type="term" value="C:cytosol"/>
    <property type="evidence" value="ECO:0007669"/>
    <property type="project" value="TreeGrafter"/>
</dbReference>
<dbReference type="GO" id="GO:0004096">
    <property type="term" value="F:catalase activity"/>
    <property type="evidence" value="ECO:0007669"/>
    <property type="project" value="UniProtKB-UniRule"/>
</dbReference>
<dbReference type="GO" id="GO:0020037">
    <property type="term" value="F:heme binding"/>
    <property type="evidence" value="ECO:0007669"/>
    <property type="project" value="InterPro"/>
</dbReference>
<dbReference type="GO" id="GO:0046872">
    <property type="term" value="F:metal ion binding"/>
    <property type="evidence" value="ECO:0007669"/>
    <property type="project" value="UniProtKB-KW"/>
</dbReference>
<dbReference type="GO" id="GO:0070301">
    <property type="term" value="P:cellular response to hydrogen peroxide"/>
    <property type="evidence" value="ECO:0007669"/>
    <property type="project" value="TreeGrafter"/>
</dbReference>
<dbReference type="GO" id="GO:0042744">
    <property type="term" value="P:hydrogen peroxide catabolic process"/>
    <property type="evidence" value="ECO:0007669"/>
    <property type="project" value="UniProtKB-KW"/>
</dbReference>
<dbReference type="CDD" id="cd00649">
    <property type="entry name" value="catalase_peroxidase_1"/>
    <property type="match status" value="1"/>
</dbReference>
<dbReference type="CDD" id="cd08200">
    <property type="entry name" value="catalase_peroxidase_2"/>
    <property type="match status" value="1"/>
</dbReference>
<dbReference type="FunFam" id="1.10.420.10:FF:000002">
    <property type="entry name" value="Catalase-peroxidase"/>
    <property type="match status" value="1"/>
</dbReference>
<dbReference type="FunFam" id="1.10.420.10:FF:000004">
    <property type="entry name" value="Catalase-peroxidase"/>
    <property type="match status" value="1"/>
</dbReference>
<dbReference type="FunFam" id="1.10.520.10:FF:000002">
    <property type="entry name" value="Catalase-peroxidase"/>
    <property type="match status" value="1"/>
</dbReference>
<dbReference type="Gene3D" id="1.10.520.10">
    <property type="match status" value="2"/>
</dbReference>
<dbReference type="Gene3D" id="1.10.420.10">
    <property type="entry name" value="Peroxidase, domain 2"/>
    <property type="match status" value="2"/>
</dbReference>
<dbReference type="HAMAP" id="MF_01961">
    <property type="entry name" value="Catal_peroxid"/>
    <property type="match status" value="1"/>
</dbReference>
<dbReference type="InterPro" id="IPR000763">
    <property type="entry name" value="Catalase_peroxidase"/>
</dbReference>
<dbReference type="InterPro" id="IPR002016">
    <property type="entry name" value="Haem_peroxidase"/>
</dbReference>
<dbReference type="InterPro" id="IPR010255">
    <property type="entry name" value="Haem_peroxidase_sf"/>
</dbReference>
<dbReference type="InterPro" id="IPR019794">
    <property type="entry name" value="Peroxidases_AS"/>
</dbReference>
<dbReference type="InterPro" id="IPR019793">
    <property type="entry name" value="Peroxidases_heam-ligand_BS"/>
</dbReference>
<dbReference type="NCBIfam" id="TIGR00198">
    <property type="entry name" value="cat_per_HPI"/>
    <property type="match status" value="1"/>
</dbReference>
<dbReference type="NCBIfam" id="NF011635">
    <property type="entry name" value="PRK15061.1"/>
    <property type="match status" value="1"/>
</dbReference>
<dbReference type="PANTHER" id="PTHR30555:SF0">
    <property type="entry name" value="CATALASE-PEROXIDASE"/>
    <property type="match status" value="1"/>
</dbReference>
<dbReference type="PANTHER" id="PTHR30555">
    <property type="entry name" value="HYDROPEROXIDASE I, BIFUNCTIONAL CATALASE-PEROXIDASE"/>
    <property type="match status" value="1"/>
</dbReference>
<dbReference type="Pfam" id="PF00141">
    <property type="entry name" value="peroxidase"/>
    <property type="match status" value="2"/>
</dbReference>
<dbReference type="PRINTS" id="PR00460">
    <property type="entry name" value="BPEROXIDASE"/>
</dbReference>
<dbReference type="PRINTS" id="PR00458">
    <property type="entry name" value="PEROXIDASE"/>
</dbReference>
<dbReference type="SUPFAM" id="SSF48113">
    <property type="entry name" value="Heme-dependent peroxidases"/>
    <property type="match status" value="2"/>
</dbReference>
<dbReference type="PROSITE" id="PS00435">
    <property type="entry name" value="PEROXIDASE_1"/>
    <property type="match status" value="1"/>
</dbReference>
<dbReference type="PROSITE" id="PS00436">
    <property type="entry name" value="PEROXIDASE_2"/>
    <property type="match status" value="1"/>
</dbReference>
<dbReference type="PROSITE" id="PS50873">
    <property type="entry name" value="PEROXIDASE_4"/>
    <property type="match status" value="1"/>
</dbReference>
<proteinExistence type="inferred from homology"/>
<reference key="1">
    <citation type="submission" date="2006-08" db="EMBL/GenBank/DDBJ databases">
        <title>Complete sequence of chromosome 2 of Burkholderia cenocepacia HI2424.</title>
        <authorList>
            <person name="Copeland A."/>
            <person name="Lucas S."/>
            <person name="Lapidus A."/>
            <person name="Barry K."/>
            <person name="Detter J.C."/>
            <person name="Glavina del Rio T."/>
            <person name="Hammon N."/>
            <person name="Israni S."/>
            <person name="Pitluck S."/>
            <person name="Chain P."/>
            <person name="Malfatti S."/>
            <person name="Shin M."/>
            <person name="Vergez L."/>
            <person name="Schmutz J."/>
            <person name="Larimer F."/>
            <person name="Land M."/>
            <person name="Hauser L."/>
            <person name="Kyrpides N."/>
            <person name="Kim E."/>
            <person name="LiPuma J.J."/>
            <person name="Gonzalez C.F."/>
            <person name="Konstantinidis K."/>
            <person name="Tiedje J.M."/>
            <person name="Richardson P."/>
        </authorList>
    </citation>
    <scope>NUCLEOTIDE SEQUENCE [LARGE SCALE GENOMIC DNA]</scope>
    <source>
        <strain>HI2424</strain>
    </source>
</reference>
<sequence>MSNEGKCPFNHGKRNGTTNRDWWPNQLNLKILHQHSSEADPMDPGFDYAEAFNSLDLAAVKADLRALMTASQDWWPADFGHYGPFFVRMAWHSAGTYRTGDGRGGAGRGQQRFAPLNSWPDNVGLDKARRLIWPVKQKYGRKISWADLIVLTGNVALESMGFKTFGFAGGREDSWEPDEDVYWGMESTWLDDKRYSGDRQLETPLAAVQMGLIYVNPEGPNGNPDPLASARDIRETFARMAMNDEETVALIAGGHTFGKTHGAGDASHVGPEPEAAPLEQMGLGWKSSFGSGKAGDAIGSGLEVIWTSTPTQWSNNFFWNLFGYDWELTKSPAGAHQWQPKGGAGADSVPDPFEPGKRRVPTMLTSDIALRADPTYEKISRRFFENPNEFAEAFARAWFKLTHRDMGPRVRYLGPEVPSEELLWQDPIPMPDHPQVDEQDVSALKAKVLASGLSVSELVSTAWASASTFRGSDKRGGANGARVRLAPQKDWEVNQPAQLATVLEVLGALQVEFNRAATGGKQVSLADLIVIAGNAGVEQAAAAAGVEITVPFTPGRGDASAEQTDVDSMAVLEPIADGFRNYLKGAYTIPAEKLLIDKAQLLSLSAPEMTVLIGGLRVLGTNVGDSKHGVFTDRREVLTNDFFRNLLDMGTEWKPTSEANEAYEGRDRATGELKWLASRVDLVFGSHSQLRALSEVYGSEDSQQKFVRDFVAAWTKVMNADRFDIKHN</sequence>
<protein>
    <recommendedName>
        <fullName evidence="1">Catalase-peroxidase 2</fullName>
        <shortName evidence="1">CP 2</shortName>
        <ecNumber evidence="1">1.11.1.21</ecNumber>
    </recommendedName>
    <alternativeName>
        <fullName evidence="1">Peroxidase/catalase 2</fullName>
    </alternativeName>
</protein>
<keyword id="KW-0349">Heme</keyword>
<keyword id="KW-0376">Hydrogen peroxide</keyword>
<keyword id="KW-0408">Iron</keyword>
<keyword id="KW-0479">Metal-binding</keyword>
<keyword id="KW-0560">Oxidoreductase</keyword>
<keyword id="KW-0575">Peroxidase</keyword>